<accession>Q3Z7Z7</accession>
<name>NUOH_DEHM1</name>
<reference key="1">
    <citation type="journal article" date="2005" name="Science">
        <title>Genome sequence of the PCE-dechlorinating bacterium Dehalococcoides ethenogenes.</title>
        <authorList>
            <person name="Seshadri R."/>
            <person name="Adrian L."/>
            <person name="Fouts D.E."/>
            <person name="Eisen J.A."/>
            <person name="Phillippy A.M."/>
            <person name="Methe B.A."/>
            <person name="Ward N.L."/>
            <person name="Nelson W.C."/>
            <person name="DeBoy R.T."/>
            <person name="Khouri H.M."/>
            <person name="Kolonay J.F."/>
            <person name="Dodson R.J."/>
            <person name="Daugherty S.C."/>
            <person name="Brinkac L.M."/>
            <person name="Sullivan S.A."/>
            <person name="Madupu R."/>
            <person name="Nelson K.E."/>
            <person name="Kang K.H."/>
            <person name="Impraim M."/>
            <person name="Tran K."/>
            <person name="Robinson J.M."/>
            <person name="Forberger H.A."/>
            <person name="Fraser C.M."/>
            <person name="Zinder S.H."/>
            <person name="Heidelberg J.F."/>
        </authorList>
    </citation>
    <scope>NUCLEOTIDE SEQUENCE [LARGE SCALE GENOMIC DNA]</scope>
    <source>
        <strain>ATCC BAA-2266 / KCTC 15142 / 195</strain>
    </source>
</reference>
<sequence length="353" mass="39155">MSDFWVHLLVYLVILFGFVIVSVLLFIWLERRFIGRFQLRPGPNRAGPFGLLQPIADAIKVLIKEDIIPTESDKGVFWLAPLVAFVPVMLMFAAIPFADGAMLVDLNIGILYILAVSSVTVIGIFMAGWSSNSKYSLLGAMRTIAQEVSYEIPLVLSILGVVMLTGSLSMNEIVKAQSVPFVLLQPLGFFVYLSAAMAEINRTPFDLLEAESEIIAGFHTEYSGMKFGLFYLMEYAEVLAISAIATTLFLGGWQGPLLHPVIWFITKVLIIFMFIIWVRATIPRLRIDQVMAFGWKFLLPLSLANLVITAFEILAAPDMNTAVLIGINIAVMFGLILLFSRFYKLGGGRVSVK</sequence>
<comment type="function">
    <text evidence="1">NDH-1 shuttles electrons from NADH, via FMN and iron-sulfur (Fe-S) centers, to quinones in the respiratory chain. The immediate electron acceptor for the enzyme in this species is believed to be ubiquinone. Couples the redox reaction to proton translocation (for every two electrons transferred, four hydrogen ions are translocated across the cytoplasmic membrane), and thus conserves the redox energy in a proton gradient. This subunit may bind ubiquinone.</text>
</comment>
<comment type="catalytic activity">
    <reaction evidence="1">
        <text>a quinone + NADH + 5 H(+)(in) = a quinol + NAD(+) + 4 H(+)(out)</text>
        <dbReference type="Rhea" id="RHEA:57888"/>
        <dbReference type="ChEBI" id="CHEBI:15378"/>
        <dbReference type="ChEBI" id="CHEBI:24646"/>
        <dbReference type="ChEBI" id="CHEBI:57540"/>
        <dbReference type="ChEBI" id="CHEBI:57945"/>
        <dbReference type="ChEBI" id="CHEBI:132124"/>
    </reaction>
</comment>
<comment type="subunit">
    <text evidence="1">NDH-1 is composed of 14 different subunits. Subunits NuoA, H, J, K, L, M, N constitute the membrane sector of the complex.</text>
</comment>
<comment type="subcellular location">
    <subcellularLocation>
        <location evidence="1">Cell membrane</location>
        <topology evidence="1">Multi-pass membrane protein</topology>
    </subcellularLocation>
</comment>
<comment type="similarity">
    <text evidence="1">Belongs to the complex I subunit 1 family.</text>
</comment>
<dbReference type="EC" id="7.1.1.-" evidence="1"/>
<dbReference type="EMBL" id="CP000027">
    <property type="protein sequence ID" value="AAW39808.1"/>
    <property type="molecule type" value="Genomic_DNA"/>
</dbReference>
<dbReference type="RefSeq" id="WP_010936631.1">
    <property type="nucleotide sequence ID" value="NC_002936.3"/>
</dbReference>
<dbReference type="SMR" id="Q3Z7Z7"/>
<dbReference type="STRING" id="243164.DET0927"/>
<dbReference type="GeneID" id="3229770"/>
<dbReference type="KEGG" id="det:DET0927"/>
<dbReference type="PATRIC" id="fig|243164.10.peg.877"/>
<dbReference type="eggNOG" id="COG1005">
    <property type="taxonomic scope" value="Bacteria"/>
</dbReference>
<dbReference type="HOGENOM" id="CLU_015134_0_1_0"/>
<dbReference type="InParanoid" id="Q3Z7Z7"/>
<dbReference type="Proteomes" id="UP000008289">
    <property type="component" value="Chromosome"/>
</dbReference>
<dbReference type="GO" id="GO:0005886">
    <property type="term" value="C:plasma membrane"/>
    <property type="evidence" value="ECO:0007669"/>
    <property type="project" value="UniProtKB-SubCell"/>
</dbReference>
<dbReference type="GO" id="GO:0003954">
    <property type="term" value="F:NADH dehydrogenase activity"/>
    <property type="evidence" value="ECO:0007669"/>
    <property type="project" value="TreeGrafter"/>
</dbReference>
<dbReference type="GO" id="GO:0016655">
    <property type="term" value="F:oxidoreductase activity, acting on NAD(P)H, quinone or similar compound as acceptor"/>
    <property type="evidence" value="ECO:0007669"/>
    <property type="project" value="UniProtKB-UniRule"/>
</dbReference>
<dbReference type="GO" id="GO:0048038">
    <property type="term" value="F:quinone binding"/>
    <property type="evidence" value="ECO:0007669"/>
    <property type="project" value="UniProtKB-KW"/>
</dbReference>
<dbReference type="GO" id="GO:0009060">
    <property type="term" value="P:aerobic respiration"/>
    <property type="evidence" value="ECO:0007669"/>
    <property type="project" value="TreeGrafter"/>
</dbReference>
<dbReference type="HAMAP" id="MF_01350">
    <property type="entry name" value="NDH1_NuoH"/>
    <property type="match status" value="1"/>
</dbReference>
<dbReference type="InterPro" id="IPR001694">
    <property type="entry name" value="NADH_UbQ_OxRdtase_su1/FPO"/>
</dbReference>
<dbReference type="InterPro" id="IPR018086">
    <property type="entry name" value="NADH_UbQ_OxRdtase_su1_CS"/>
</dbReference>
<dbReference type="NCBIfam" id="NF004741">
    <property type="entry name" value="PRK06076.1-2"/>
    <property type="match status" value="1"/>
</dbReference>
<dbReference type="PANTHER" id="PTHR11432">
    <property type="entry name" value="NADH DEHYDROGENASE SUBUNIT 1"/>
    <property type="match status" value="1"/>
</dbReference>
<dbReference type="PANTHER" id="PTHR11432:SF3">
    <property type="entry name" value="NADH-UBIQUINONE OXIDOREDUCTASE CHAIN 1"/>
    <property type="match status" value="1"/>
</dbReference>
<dbReference type="Pfam" id="PF00146">
    <property type="entry name" value="NADHdh"/>
    <property type="match status" value="1"/>
</dbReference>
<dbReference type="PROSITE" id="PS00667">
    <property type="entry name" value="COMPLEX1_ND1_1"/>
    <property type="match status" value="1"/>
</dbReference>
<organism>
    <name type="scientific">Dehalococcoides mccartyi (strain ATCC BAA-2266 / KCTC 15142 / 195)</name>
    <name type="common">Dehalococcoides ethenogenes (strain 195)</name>
    <dbReference type="NCBI Taxonomy" id="243164"/>
    <lineage>
        <taxon>Bacteria</taxon>
        <taxon>Bacillati</taxon>
        <taxon>Chloroflexota</taxon>
        <taxon>Dehalococcoidia</taxon>
        <taxon>Dehalococcoidales</taxon>
        <taxon>Dehalococcoidaceae</taxon>
        <taxon>Dehalococcoides</taxon>
    </lineage>
</organism>
<feature type="chain" id="PRO_0000240069" description="NADH-quinone oxidoreductase subunit H">
    <location>
        <begin position="1"/>
        <end position="353"/>
    </location>
</feature>
<feature type="transmembrane region" description="Helical" evidence="1">
    <location>
        <begin position="8"/>
        <end position="28"/>
    </location>
</feature>
<feature type="transmembrane region" description="Helical" evidence="1">
    <location>
        <begin position="75"/>
        <end position="95"/>
    </location>
</feature>
<feature type="transmembrane region" description="Helical" evidence="1">
    <location>
        <begin position="108"/>
        <end position="128"/>
    </location>
</feature>
<feature type="transmembrane region" description="Helical" evidence="1">
    <location>
        <begin position="148"/>
        <end position="168"/>
    </location>
</feature>
<feature type="transmembrane region" description="Helical" evidence="1">
    <location>
        <begin position="178"/>
        <end position="198"/>
    </location>
</feature>
<feature type="transmembrane region" description="Helical" evidence="1">
    <location>
        <begin position="229"/>
        <end position="249"/>
    </location>
</feature>
<feature type="transmembrane region" description="Helical" evidence="1">
    <location>
        <begin position="258"/>
        <end position="278"/>
    </location>
</feature>
<feature type="transmembrane region" description="Helical" evidence="1">
    <location>
        <begin position="297"/>
        <end position="317"/>
    </location>
</feature>
<feature type="transmembrane region" description="Helical" evidence="1">
    <location>
        <begin position="319"/>
        <end position="339"/>
    </location>
</feature>
<evidence type="ECO:0000255" key="1">
    <source>
        <dbReference type="HAMAP-Rule" id="MF_01350"/>
    </source>
</evidence>
<protein>
    <recommendedName>
        <fullName evidence="1">NADH-quinone oxidoreductase subunit H</fullName>
        <ecNumber evidence="1">7.1.1.-</ecNumber>
    </recommendedName>
    <alternativeName>
        <fullName evidence="1">NADH dehydrogenase I subunit H</fullName>
    </alternativeName>
    <alternativeName>
        <fullName evidence="1">NDH-1 subunit H</fullName>
    </alternativeName>
</protein>
<proteinExistence type="inferred from homology"/>
<keyword id="KW-1003">Cell membrane</keyword>
<keyword id="KW-0472">Membrane</keyword>
<keyword id="KW-0520">NAD</keyword>
<keyword id="KW-0874">Quinone</keyword>
<keyword id="KW-1278">Translocase</keyword>
<keyword id="KW-0812">Transmembrane</keyword>
<keyword id="KW-1133">Transmembrane helix</keyword>
<keyword id="KW-0830">Ubiquinone</keyword>
<gene>
    <name evidence="1" type="primary">nuoH</name>
    <name type="ordered locus">DET0927</name>
</gene>